<proteinExistence type="inferred from homology"/>
<gene>
    <name evidence="1" type="primary">pdxH</name>
    <name type="ordered locus">Sden_2277</name>
</gene>
<reference key="1">
    <citation type="submission" date="2006-03" db="EMBL/GenBank/DDBJ databases">
        <title>Complete sequence of Shewanella denitrificans OS217.</title>
        <authorList>
            <consortium name="US DOE Joint Genome Institute"/>
            <person name="Copeland A."/>
            <person name="Lucas S."/>
            <person name="Lapidus A."/>
            <person name="Barry K."/>
            <person name="Detter J.C."/>
            <person name="Glavina del Rio T."/>
            <person name="Hammon N."/>
            <person name="Israni S."/>
            <person name="Dalin E."/>
            <person name="Tice H."/>
            <person name="Pitluck S."/>
            <person name="Brettin T."/>
            <person name="Bruce D."/>
            <person name="Han C."/>
            <person name="Tapia R."/>
            <person name="Gilna P."/>
            <person name="Kiss H."/>
            <person name="Schmutz J."/>
            <person name="Larimer F."/>
            <person name="Land M."/>
            <person name="Hauser L."/>
            <person name="Kyrpides N."/>
            <person name="Lykidis A."/>
            <person name="Richardson P."/>
        </authorList>
    </citation>
    <scope>NUCLEOTIDE SEQUENCE [LARGE SCALE GENOMIC DNA]</scope>
    <source>
        <strain>OS217 / ATCC BAA-1090 / DSM 15013</strain>
    </source>
</reference>
<dbReference type="EC" id="1.4.3.5" evidence="1"/>
<dbReference type="EMBL" id="CP000302">
    <property type="protein sequence ID" value="ABE55557.1"/>
    <property type="molecule type" value="Genomic_DNA"/>
</dbReference>
<dbReference type="RefSeq" id="WP_011496708.1">
    <property type="nucleotide sequence ID" value="NC_007954.1"/>
</dbReference>
<dbReference type="SMR" id="Q12LW9"/>
<dbReference type="STRING" id="318161.Sden_2277"/>
<dbReference type="KEGG" id="sdn:Sden_2277"/>
<dbReference type="eggNOG" id="COG0259">
    <property type="taxonomic scope" value="Bacteria"/>
</dbReference>
<dbReference type="HOGENOM" id="CLU_032263_2_2_6"/>
<dbReference type="OrthoDB" id="9780392at2"/>
<dbReference type="UniPathway" id="UPA01068">
    <property type="reaction ID" value="UER00304"/>
</dbReference>
<dbReference type="UniPathway" id="UPA01068">
    <property type="reaction ID" value="UER00305"/>
</dbReference>
<dbReference type="Proteomes" id="UP000001982">
    <property type="component" value="Chromosome"/>
</dbReference>
<dbReference type="GO" id="GO:0010181">
    <property type="term" value="F:FMN binding"/>
    <property type="evidence" value="ECO:0007669"/>
    <property type="project" value="UniProtKB-UniRule"/>
</dbReference>
<dbReference type="GO" id="GO:0004733">
    <property type="term" value="F:pyridoxamine phosphate oxidase activity"/>
    <property type="evidence" value="ECO:0007669"/>
    <property type="project" value="UniProtKB-UniRule"/>
</dbReference>
<dbReference type="GO" id="GO:0008615">
    <property type="term" value="P:pyridoxine biosynthetic process"/>
    <property type="evidence" value="ECO:0007669"/>
    <property type="project" value="UniProtKB-KW"/>
</dbReference>
<dbReference type="Gene3D" id="2.30.110.10">
    <property type="entry name" value="Electron Transport, Fmn-binding Protein, Chain A"/>
    <property type="match status" value="1"/>
</dbReference>
<dbReference type="HAMAP" id="MF_01629">
    <property type="entry name" value="PdxH"/>
    <property type="match status" value="1"/>
</dbReference>
<dbReference type="InterPro" id="IPR000659">
    <property type="entry name" value="Pyridox_Oxase"/>
</dbReference>
<dbReference type="InterPro" id="IPR019740">
    <property type="entry name" value="Pyridox_Oxase_CS"/>
</dbReference>
<dbReference type="InterPro" id="IPR011576">
    <property type="entry name" value="Pyridox_Oxase_N"/>
</dbReference>
<dbReference type="InterPro" id="IPR019576">
    <property type="entry name" value="Pyridoxamine_oxidase_dimer_C"/>
</dbReference>
<dbReference type="InterPro" id="IPR012349">
    <property type="entry name" value="Split_barrel_FMN-bd"/>
</dbReference>
<dbReference type="NCBIfam" id="TIGR00558">
    <property type="entry name" value="pdxH"/>
    <property type="match status" value="1"/>
</dbReference>
<dbReference type="NCBIfam" id="NF004231">
    <property type="entry name" value="PRK05679.1"/>
    <property type="match status" value="1"/>
</dbReference>
<dbReference type="PANTHER" id="PTHR10851:SF0">
    <property type="entry name" value="PYRIDOXINE-5'-PHOSPHATE OXIDASE"/>
    <property type="match status" value="1"/>
</dbReference>
<dbReference type="PANTHER" id="PTHR10851">
    <property type="entry name" value="PYRIDOXINE-5-PHOSPHATE OXIDASE"/>
    <property type="match status" value="1"/>
</dbReference>
<dbReference type="Pfam" id="PF10590">
    <property type="entry name" value="PNP_phzG_C"/>
    <property type="match status" value="1"/>
</dbReference>
<dbReference type="Pfam" id="PF01243">
    <property type="entry name" value="PNPOx_N"/>
    <property type="match status" value="1"/>
</dbReference>
<dbReference type="PIRSF" id="PIRSF000190">
    <property type="entry name" value="Pyd_amn-ph_oxd"/>
    <property type="match status" value="1"/>
</dbReference>
<dbReference type="SUPFAM" id="SSF50475">
    <property type="entry name" value="FMN-binding split barrel"/>
    <property type="match status" value="1"/>
</dbReference>
<dbReference type="PROSITE" id="PS01064">
    <property type="entry name" value="PYRIDOX_OXIDASE"/>
    <property type="match status" value="1"/>
</dbReference>
<keyword id="KW-0285">Flavoprotein</keyword>
<keyword id="KW-0288">FMN</keyword>
<keyword id="KW-0560">Oxidoreductase</keyword>
<keyword id="KW-0664">Pyridoxine biosynthesis</keyword>
<keyword id="KW-1185">Reference proteome</keyword>
<name>PDXH_SHEDO</name>
<accession>Q12LW9</accession>
<organism>
    <name type="scientific">Shewanella denitrificans (strain OS217 / ATCC BAA-1090 / DSM 15013)</name>
    <dbReference type="NCBI Taxonomy" id="318161"/>
    <lineage>
        <taxon>Bacteria</taxon>
        <taxon>Pseudomonadati</taxon>
        <taxon>Pseudomonadota</taxon>
        <taxon>Gammaproteobacteria</taxon>
        <taxon>Alteromonadales</taxon>
        <taxon>Shewanellaceae</taxon>
        <taxon>Shewanella</taxon>
    </lineage>
</organism>
<feature type="chain" id="PRO_0000292326" description="Pyridoxine/pyridoxamine 5'-phosphate oxidase">
    <location>
        <begin position="1"/>
        <end position="212"/>
    </location>
</feature>
<feature type="binding site" evidence="1">
    <location>
        <begin position="8"/>
        <end position="11"/>
    </location>
    <ligand>
        <name>substrate</name>
    </ligand>
</feature>
<feature type="binding site" evidence="1">
    <location>
        <begin position="61"/>
        <end position="66"/>
    </location>
    <ligand>
        <name>FMN</name>
        <dbReference type="ChEBI" id="CHEBI:58210"/>
    </ligand>
</feature>
<feature type="binding site" evidence="1">
    <location>
        <position position="66"/>
    </location>
    <ligand>
        <name>substrate</name>
    </ligand>
</feature>
<feature type="binding site" evidence="1">
    <location>
        <begin position="76"/>
        <end position="77"/>
    </location>
    <ligand>
        <name>FMN</name>
        <dbReference type="ChEBI" id="CHEBI:58210"/>
    </ligand>
</feature>
<feature type="binding site" evidence="1">
    <location>
        <position position="82"/>
    </location>
    <ligand>
        <name>FMN</name>
        <dbReference type="ChEBI" id="CHEBI:58210"/>
    </ligand>
</feature>
<feature type="binding site" evidence="1">
    <location>
        <position position="83"/>
    </location>
    <ligand>
        <name>FMN</name>
        <dbReference type="ChEBI" id="CHEBI:58210"/>
    </ligand>
</feature>
<feature type="binding site" evidence="1">
    <location>
        <position position="105"/>
    </location>
    <ligand>
        <name>FMN</name>
        <dbReference type="ChEBI" id="CHEBI:58210"/>
    </ligand>
</feature>
<feature type="binding site" evidence="1">
    <location>
        <position position="123"/>
    </location>
    <ligand>
        <name>substrate</name>
    </ligand>
</feature>
<feature type="binding site" evidence="1">
    <location>
        <position position="127"/>
    </location>
    <ligand>
        <name>substrate</name>
    </ligand>
</feature>
<feature type="binding site" evidence="1">
    <location>
        <position position="131"/>
    </location>
    <ligand>
        <name>substrate</name>
    </ligand>
</feature>
<feature type="binding site" evidence="1">
    <location>
        <begin position="140"/>
        <end position="141"/>
    </location>
    <ligand>
        <name>FMN</name>
        <dbReference type="ChEBI" id="CHEBI:58210"/>
    </ligand>
</feature>
<feature type="binding site" evidence="1">
    <location>
        <position position="185"/>
    </location>
    <ligand>
        <name>FMN</name>
        <dbReference type="ChEBI" id="CHEBI:58210"/>
    </ligand>
</feature>
<feature type="binding site" evidence="1">
    <location>
        <begin position="191"/>
        <end position="193"/>
    </location>
    <ligand>
        <name>substrate</name>
    </ligand>
</feature>
<feature type="binding site" evidence="1">
    <location>
        <position position="195"/>
    </location>
    <ligand>
        <name>FMN</name>
        <dbReference type="ChEBI" id="CHEBI:58210"/>
    </ligand>
</feature>
<protein>
    <recommendedName>
        <fullName evidence="1">Pyridoxine/pyridoxamine 5'-phosphate oxidase</fullName>
        <ecNumber evidence="1">1.4.3.5</ecNumber>
    </recommendedName>
    <alternativeName>
        <fullName evidence="1">PNP/PMP oxidase</fullName>
        <shortName evidence="1">PNPOx</shortName>
    </alternativeName>
    <alternativeName>
        <fullName evidence="1">Pyridoxal 5'-phosphate synthase</fullName>
    </alternativeName>
</protein>
<comment type="function">
    <text evidence="1">Catalyzes the oxidation of either pyridoxine 5'-phosphate (PNP) or pyridoxamine 5'-phosphate (PMP) into pyridoxal 5'-phosphate (PLP).</text>
</comment>
<comment type="catalytic activity">
    <reaction evidence="1">
        <text>pyridoxamine 5'-phosphate + O2 + H2O = pyridoxal 5'-phosphate + H2O2 + NH4(+)</text>
        <dbReference type="Rhea" id="RHEA:15817"/>
        <dbReference type="ChEBI" id="CHEBI:15377"/>
        <dbReference type="ChEBI" id="CHEBI:15379"/>
        <dbReference type="ChEBI" id="CHEBI:16240"/>
        <dbReference type="ChEBI" id="CHEBI:28938"/>
        <dbReference type="ChEBI" id="CHEBI:58451"/>
        <dbReference type="ChEBI" id="CHEBI:597326"/>
        <dbReference type="EC" id="1.4.3.5"/>
    </reaction>
</comment>
<comment type="catalytic activity">
    <reaction evidence="1">
        <text>pyridoxine 5'-phosphate + O2 = pyridoxal 5'-phosphate + H2O2</text>
        <dbReference type="Rhea" id="RHEA:15149"/>
        <dbReference type="ChEBI" id="CHEBI:15379"/>
        <dbReference type="ChEBI" id="CHEBI:16240"/>
        <dbReference type="ChEBI" id="CHEBI:58589"/>
        <dbReference type="ChEBI" id="CHEBI:597326"/>
        <dbReference type="EC" id="1.4.3.5"/>
    </reaction>
</comment>
<comment type="cofactor">
    <cofactor evidence="1">
        <name>FMN</name>
        <dbReference type="ChEBI" id="CHEBI:58210"/>
    </cofactor>
    <text evidence="1">Binds 1 FMN per subunit.</text>
</comment>
<comment type="pathway">
    <text evidence="1">Cofactor metabolism; pyridoxal 5'-phosphate salvage; pyridoxal 5'-phosphate from pyridoxamine 5'-phosphate: step 1/1.</text>
</comment>
<comment type="pathway">
    <text evidence="1">Cofactor metabolism; pyridoxal 5'-phosphate salvage; pyridoxal 5'-phosphate from pyridoxine 5'-phosphate: step 1/1.</text>
</comment>
<comment type="subunit">
    <text evidence="1">Homodimer.</text>
</comment>
<comment type="similarity">
    <text evidence="1">Belongs to the pyridoxamine 5'-phosphate oxidase family.</text>
</comment>
<evidence type="ECO:0000255" key="1">
    <source>
        <dbReference type="HAMAP-Rule" id="MF_01629"/>
    </source>
</evidence>
<sequence>MSDLSDIRREYTKGGLRRKDLPDNPMALFETWMTQAKEANLSDPTAMCVATVDENGQPFQRIVLLKRFDDTGFVFFTNLESRKAKQIAINKQISLLFPWHPLERQVAVLGEAEPLSMMEVAKYFISRPKDSQIAAWVSKQSSKITARQALEGKFNEMKAKFAQGEVPIPKFWGGFLVRPKSIEFWQGGEHRLHDRFIYTKAASEWQIDRLAP</sequence>